<reference key="1">
    <citation type="submission" date="2006-09" db="EMBL/GenBank/DDBJ databases">
        <authorList>
            <consortium name="The Klebsiella pneumonia Genome Sequencing Project"/>
            <person name="McClelland M."/>
            <person name="Sanderson E.K."/>
            <person name="Spieth J."/>
            <person name="Clifton W.S."/>
            <person name="Latreille P."/>
            <person name="Sabo A."/>
            <person name="Pepin K."/>
            <person name="Bhonagiri V."/>
            <person name="Porwollik S."/>
            <person name="Ali J."/>
            <person name="Wilson R.K."/>
        </authorList>
    </citation>
    <scope>NUCLEOTIDE SEQUENCE [LARGE SCALE GENOMIC DNA]</scope>
    <source>
        <strain>ATCC 700721 / MGH 78578</strain>
    </source>
</reference>
<dbReference type="EC" id="1.14.99.46" evidence="1"/>
<dbReference type="EMBL" id="CP000647">
    <property type="protein sequence ID" value="ABR76473.1"/>
    <property type="molecule type" value="Genomic_DNA"/>
</dbReference>
<dbReference type="RefSeq" id="WP_004179293.1">
    <property type="nucleotide sequence ID" value="NC_009648.1"/>
</dbReference>
<dbReference type="SMR" id="A6T7A2"/>
<dbReference type="STRING" id="272620.KPN_01038"/>
<dbReference type="PaxDb" id="272620-KPN_01038"/>
<dbReference type="DNASU" id="5340701"/>
<dbReference type="EnsemblBacteria" id="ABR76473">
    <property type="protein sequence ID" value="ABR76473"/>
    <property type="gene ID" value="KPN_01038"/>
</dbReference>
<dbReference type="KEGG" id="kpn:KPN_01038"/>
<dbReference type="HOGENOM" id="CLU_027853_1_1_6"/>
<dbReference type="Proteomes" id="UP000000265">
    <property type="component" value="Chromosome"/>
</dbReference>
<dbReference type="GO" id="GO:0008726">
    <property type="term" value="F:alkanesulfonate monooxygenase activity"/>
    <property type="evidence" value="ECO:0007669"/>
    <property type="project" value="TreeGrafter"/>
</dbReference>
<dbReference type="GO" id="GO:0052614">
    <property type="term" value="F:uracil oxygenase activity"/>
    <property type="evidence" value="ECO:0007669"/>
    <property type="project" value="UniProtKB-EC"/>
</dbReference>
<dbReference type="GO" id="GO:0046306">
    <property type="term" value="P:alkanesulfonate catabolic process"/>
    <property type="evidence" value="ECO:0007669"/>
    <property type="project" value="TreeGrafter"/>
</dbReference>
<dbReference type="GO" id="GO:0019740">
    <property type="term" value="P:nitrogen utilization"/>
    <property type="evidence" value="ECO:0007669"/>
    <property type="project" value="UniProtKB-UniRule"/>
</dbReference>
<dbReference type="GO" id="GO:0006212">
    <property type="term" value="P:uracil catabolic process"/>
    <property type="evidence" value="ECO:0007669"/>
    <property type="project" value="UniProtKB-UniRule"/>
</dbReference>
<dbReference type="CDD" id="cd01094">
    <property type="entry name" value="Alkanesulfonate_monoxygenase"/>
    <property type="match status" value="1"/>
</dbReference>
<dbReference type="FunFam" id="3.20.20.30:FF:000003">
    <property type="entry name" value="Pyrimidine monooxygenase RutA"/>
    <property type="match status" value="1"/>
</dbReference>
<dbReference type="Gene3D" id="3.20.20.30">
    <property type="entry name" value="Luciferase-like domain"/>
    <property type="match status" value="1"/>
</dbReference>
<dbReference type="HAMAP" id="MF_01699">
    <property type="entry name" value="RutA"/>
    <property type="match status" value="1"/>
</dbReference>
<dbReference type="InterPro" id="IPR011251">
    <property type="entry name" value="Luciferase-like_dom"/>
</dbReference>
<dbReference type="InterPro" id="IPR036661">
    <property type="entry name" value="Luciferase-like_sf"/>
</dbReference>
<dbReference type="InterPro" id="IPR019914">
    <property type="entry name" value="Pyrimidine_monooxygenase_RutA"/>
</dbReference>
<dbReference type="InterPro" id="IPR050172">
    <property type="entry name" value="SsuD_RutA_monooxygenase"/>
</dbReference>
<dbReference type="NCBIfam" id="TIGR03612">
    <property type="entry name" value="RutA"/>
    <property type="match status" value="1"/>
</dbReference>
<dbReference type="PANTHER" id="PTHR42847">
    <property type="entry name" value="ALKANESULFONATE MONOOXYGENASE"/>
    <property type="match status" value="1"/>
</dbReference>
<dbReference type="PANTHER" id="PTHR42847:SF4">
    <property type="entry name" value="ALKANESULFONATE MONOOXYGENASE-RELATED"/>
    <property type="match status" value="1"/>
</dbReference>
<dbReference type="Pfam" id="PF00296">
    <property type="entry name" value="Bac_luciferase"/>
    <property type="match status" value="1"/>
</dbReference>
<dbReference type="SUPFAM" id="SSF51679">
    <property type="entry name" value="Bacterial luciferase-like"/>
    <property type="match status" value="1"/>
</dbReference>
<name>RUTA_KLEP7</name>
<sequence>MKIGVFVPIGNNGWLISTHAPQYMPTFELNKAIVQKAEHYHFDFALSMIKLRGFGGKTEFWDHNLESFTLMAGLAAVTSKIQIYATAATLTLPPAIVARMASTIDSISGGRFGVNLVTGWQKPEYDQMGMWPGDDYFASRYDYLTEYVQVLRDLWGTGRSDFKGDYFTMNDCRVSPRPSQPMKVICAGQSDAGMAFSAQHADYNFCFGKGVNTPTAFAPTAARMMQAAEKTGRDVGSYVLFMVIADETDEAARAKWEHYKAGADEEALAWLTEQSQKDTRSGSDTNVRQMADPTSAVNINMGTLVGSYASVARMLDEVASVPGTDGVLLTFDDFLAGIDAFGERIQPLMRCRNHIASVTREVA</sequence>
<accession>A6T7A2</accession>
<organism>
    <name type="scientific">Klebsiella pneumoniae subsp. pneumoniae (strain ATCC 700721 / MGH 78578)</name>
    <dbReference type="NCBI Taxonomy" id="272620"/>
    <lineage>
        <taxon>Bacteria</taxon>
        <taxon>Pseudomonadati</taxon>
        <taxon>Pseudomonadota</taxon>
        <taxon>Gammaproteobacteria</taxon>
        <taxon>Enterobacterales</taxon>
        <taxon>Enterobacteriaceae</taxon>
        <taxon>Klebsiella/Raoultella group</taxon>
        <taxon>Klebsiella</taxon>
        <taxon>Klebsiella pneumoniae complex</taxon>
    </lineage>
</organism>
<comment type="function">
    <text evidence="1">Catalyzes the pyrimidine ring opening between N-3 and C-4 by an unusual flavin hydroperoxide-catalyzed mechanism, adding oxygen atoms in the process to yield ureidoacrylate peracid, that immediately reacts with FMN forming ureidoacrylate and FMN-N(5)-oxide. The FMN-N(5)-oxide reacts spontaneously with NADH to produce FMN. Requires the flavin reductase RutF to regenerate FMN in vivo.</text>
</comment>
<comment type="catalytic activity">
    <reaction evidence="1">
        <text>uracil + FMNH2 + NADH + O2 = (Z)-3-ureidoacrylate + FMN + NAD(+) + H2O + H(+)</text>
        <dbReference type="Rhea" id="RHEA:31587"/>
        <dbReference type="ChEBI" id="CHEBI:15377"/>
        <dbReference type="ChEBI" id="CHEBI:15378"/>
        <dbReference type="ChEBI" id="CHEBI:15379"/>
        <dbReference type="ChEBI" id="CHEBI:17568"/>
        <dbReference type="ChEBI" id="CHEBI:57540"/>
        <dbReference type="ChEBI" id="CHEBI:57618"/>
        <dbReference type="ChEBI" id="CHEBI:57945"/>
        <dbReference type="ChEBI" id="CHEBI:58210"/>
        <dbReference type="ChEBI" id="CHEBI:59891"/>
        <dbReference type="EC" id="1.14.99.46"/>
    </reaction>
</comment>
<comment type="catalytic activity">
    <reaction evidence="1">
        <text>thymine + FMNH2 + NADH + O2 = (Z)-2-methylureidoacrylate + FMN + NAD(+) + H2O + H(+)</text>
        <dbReference type="Rhea" id="RHEA:31599"/>
        <dbReference type="ChEBI" id="CHEBI:15377"/>
        <dbReference type="ChEBI" id="CHEBI:15378"/>
        <dbReference type="ChEBI" id="CHEBI:15379"/>
        <dbReference type="ChEBI" id="CHEBI:17821"/>
        <dbReference type="ChEBI" id="CHEBI:57540"/>
        <dbReference type="ChEBI" id="CHEBI:57618"/>
        <dbReference type="ChEBI" id="CHEBI:57945"/>
        <dbReference type="ChEBI" id="CHEBI:58210"/>
        <dbReference type="ChEBI" id="CHEBI:143783"/>
        <dbReference type="EC" id="1.14.99.46"/>
    </reaction>
</comment>
<comment type="similarity">
    <text evidence="1">Belongs to the NtaA/SnaA/DszA monooxygenase family. RutA subfamily.</text>
</comment>
<feature type="chain" id="PRO_0000402626" description="Pyrimidine monooxygenase RutA">
    <location>
        <begin position="1"/>
        <end position="363"/>
    </location>
</feature>
<feature type="binding site" evidence="1">
    <location>
        <begin position="49"/>
        <end position="50"/>
    </location>
    <ligand>
        <name>FMN</name>
        <dbReference type="ChEBI" id="CHEBI:58210"/>
    </ligand>
</feature>
<feature type="binding site" evidence="1">
    <location>
        <position position="115"/>
    </location>
    <ligand>
        <name>FMN</name>
        <dbReference type="ChEBI" id="CHEBI:58210"/>
    </ligand>
</feature>
<feature type="binding site" evidence="1">
    <location>
        <position position="124"/>
    </location>
    <ligand>
        <name>FMN</name>
        <dbReference type="ChEBI" id="CHEBI:58210"/>
    </ligand>
</feature>
<feature type="binding site" evidence="1">
    <location>
        <begin position="140"/>
        <end position="141"/>
    </location>
    <ligand>
        <name>FMN</name>
        <dbReference type="ChEBI" id="CHEBI:58210"/>
    </ligand>
</feature>
<feature type="binding site" evidence="1">
    <location>
        <position position="190"/>
    </location>
    <ligand>
        <name>FMN</name>
        <dbReference type="ChEBI" id="CHEBI:58210"/>
    </ligand>
</feature>
<keyword id="KW-0285">Flavoprotein</keyword>
<keyword id="KW-0288">FMN</keyword>
<keyword id="KW-0503">Monooxygenase</keyword>
<keyword id="KW-0521">NADP</keyword>
<keyword id="KW-0560">Oxidoreductase</keyword>
<protein>
    <recommendedName>
        <fullName evidence="1">Pyrimidine monooxygenase RutA</fullName>
        <ecNumber evidence="1">1.14.99.46</ecNumber>
    </recommendedName>
</protein>
<evidence type="ECO:0000255" key="1">
    <source>
        <dbReference type="HAMAP-Rule" id="MF_01699"/>
    </source>
</evidence>
<proteinExistence type="inferred from homology"/>
<gene>
    <name evidence="1" type="primary">rutA</name>
    <name type="ordered locus">KPN78578_10120</name>
    <name type="ORF">KPN_01038</name>
</gene>